<reference key="1">
    <citation type="submission" date="2005-10" db="EMBL/GenBank/DDBJ databases">
        <title>Complete sequence of Pelobacter carbinolicus DSM 2380.</title>
        <authorList>
            <person name="Copeland A."/>
            <person name="Lucas S."/>
            <person name="Lapidus A."/>
            <person name="Barry K."/>
            <person name="Detter J.C."/>
            <person name="Glavina T."/>
            <person name="Hammon N."/>
            <person name="Israni S."/>
            <person name="Pitluck S."/>
            <person name="Chertkov O."/>
            <person name="Schmutz J."/>
            <person name="Larimer F."/>
            <person name="Land M."/>
            <person name="Kyrpides N."/>
            <person name="Ivanova N."/>
            <person name="Richardson P."/>
        </authorList>
    </citation>
    <scope>NUCLEOTIDE SEQUENCE [LARGE SCALE GENOMIC DNA]</scope>
    <source>
        <strain>DSM 2380 / NBRC 103641 / GraBd1</strain>
    </source>
</reference>
<accession>Q3A8G4</accession>
<gene>
    <name type="ordered locus">Pcar_0065</name>
</gene>
<comment type="similarity">
    <text evidence="2">Belongs to the UPF0758 family.</text>
</comment>
<dbReference type="EMBL" id="CP000142">
    <property type="protein sequence ID" value="ABA87328.1"/>
    <property type="molecule type" value="Genomic_DNA"/>
</dbReference>
<dbReference type="RefSeq" id="WP_011339715.1">
    <property type="nucleotide sequence ID" value="NC_007498.2"/>
</dbReference>
<dbReference type="SMR" id="Q3A8G4"/>
<dbReference type="STRING" id="338963.Pcar_0065"/>
<dbReference type="KEGG" id="pca:Pcar_0065"/>
<dbReference type="eggNOG" id="COG2003">
    <property type="taxonomic scope" value="Bacteria"/>
</dbReference>
<dbReference type="HOGENOM" id="CLU_073529_0_2_7"/>
<dbReference type="OrthoDB" id="9804482at2"/>
<dbReference type="Proteomes" id="UP000002534">
    <property type="component" value="Chromosome"/>
</dbReference>
<dbReference type="GO" id="GO:0046872">
    <property type="term" value="F:metal ion binding"/>
    <property type="evidence" value="ECO:0007669"/>
    <property type="project" value="UniProtKB-KW"/>
</dbReference>
<dbReference type="GO" id="GO:0008237">
    <property type="term" value="F:metallopeptidase activity"/>
    <property type="evidence" value="ECO:0007669"/>
    <property type="project" value="UniProtKB-KW"/>
</dbReference>
<dbReference type="GO" id="GO:0006508">
    <property type="term" value="P:proteolysis"/>
    <property type="evidence" value="ECO:0007669"/>
    <property type="project" value="UniProtKB-KW"/>
</dbReference>
<dbReference type="CDD" id="cd08071">
    <property type="entry name" value="MPN_DUF2466"/>
    <property type="match status" value="1"/>
</dbReference>
<dbReference type="Gene3D" id="1.10.150.20">
    <property type="entry name" value="5' to 3' exonuclease, C-terminal subdomain"/>
    <property type="match status" value="1"/>
</dbReference>
<dbReference type="Gene3D" id="3.40.140.10">
    <property type="entry name" value="Cytidine Deaminase, domain 2"/>
    <property type="match status" value="1"/>
</dbReference>
<dbReference type="InterPro" id="IPR037518">
    <property type="entry name" value="MPN"/>
</dbReference>
<dbReference type="InterPro" id="IPR025657">
    <property type="entry name" value="RadC_JAB"/>
</dbReference>
<dbReference type="InterPro" id="IPR010994">
    <property type="entry name" value="RuvA_2-like"/>
</dbReference>
<dbReference type="InterPro" id="IPR001405">
    <property type="entry name" value="UPF0758"/>
</dbReference>
<dbReference type="InterPro" id="IPR020891">
    <property type="entry name" value="UPF0758_CS"/>
</dbReference>
<dbReference type="InterPro" id="IPR046778">
    <property type="entry name" value="UPF0758_N"/>
</dbReference>
<dbReference type="NCBIfam" id="NF000642">
    <property type="entry name" value="PRK00024.1"/>
    <property type="match status" value="1"/>
</dbReference>
<dbReference type="NCBIfam" id="TIGR00608">
    <property type="entry name" value="radc"/>
    <property type="match status" value="1"/>
</dbReference>
<dbReference type="PANTHER" id="PTHR30471">
    <property type="entry name" value="DNA REPAIR PROTEIN RADC"/>
    <property type="match status" value="1"/>
</dbReference>
<dbReference type="PANTHER" id="PTHR30471:SF3">
    <property type="entry name" value="UPF0758 PROTEIN YEES-RELATED"/>
    <property type="match status" value="1"/>
</dbReference>
<dbReference type="Pfam" id="PF04002">
    <property type="entry name" value="RadC"/>
    <property type="match status" value="1"/>
</dbReference>
<dbReference type="Pfam" id="PF20582">
    <property type="entry name" value="UPF0758_N"/>
    <property type="match status" value="1"/>
</dbReference>
<dbReference type="SUPFAM" id="SSF47781">
    <property type="entry name" value="RuvA domain 2-like"/>
    <property type="match status" value="1"/>
</dbReference>
<dbReference type="PROSITE" id="PS50249">
    <property type="entry name" value="MPN"/>
    <property type="match status" value="1"/>
</dbReference>
<dbReference type="PROSITE" id="PS01302">
    <property type="entry name" value="UPF0758"/>
    <property type="match status" value="1"/>
</dbReference>
<organism>
    <name type="scientific">Syntrophotalea carbinolica (strain DSM 2380 / NBRC 103641 / GraBd1)</name>
    <name type="common">Pelobacter carbinolicus</name>
    <dbReference type="NCBI Taxonomy" id="338963"/>
    <lineage>
        <taxon>Bacteria</taxon>
        <taxon>Pseudomonadati</taxon>
        <taxon>Thermodesulfobacteriota</taxon>
        <taxon>Desulfuromonadia</taxon>
        <taxon>Desulfuromonadales</taxon>
        <taxon>Syntrophotaleaceae</taxon>
        <taxon>Syntrophotalea</taxon>
    </lineage>
</organism>
<feature type="chain" id="PRO_0000322694" description="UPF0758 protein Pcar_0065">
    <location>
        <begin position="1"/>
        <end position="227"/>
    </location>
</feature>
<feature type="domain" description="MPN" evidence="1">
    <location>
        <begin position="105"/>
        <end position="227"/>
    </location>
</feature>
<feature type="short sequence motif" description="JAMM motif" evidence="1">
    <location>
        <begin position="176"/>
        <end position="189"/>
    </location>
</feature>
<feature type="binding site" evidence="1">
    <location>
        <position position="176"/>
    </location>
    <ligand>
        <name>Zn(2+)</name>
        <dbReference type="ChEBI" id="CHEBI:29105"/>
        <note>catalytic</note>
    </ligand>
</feature>
<feature type="binding site" evidence="1">
    <location>
        <position position="178"/>
    </location>
    <ligand>
        <name>Zn(2+)</name>
        <dbReference type="ChEBI" id="CHEBI:29105"/>
        <note>catalytic</note>
    </ligand>
</feature>
<feature type="binding site" evidence="1">
    <location>
        <position position="189"/>
    </location>
    <ligand>
        <name>Zn(2+)</name>
        <dbReference type="ChEBI" id="CHEBI:29105"/>
        <note>catalytic</note>
    </ligand>
</feature>
<keyword id="KW-0378">Hydrolase</keyword>
<keyword id="KW-0479">Metal-binding</keyword>
<keyword id="KW-0482">Metalloprotease</keyword>
<keyword id="KW-0645">Protease</keyword>
<keyword id="KW-1185">Reference proteome</keyword>
<keyword id="KW-0862">Zinc</keyword>
<name>Y065_SYNC1</name>
<evidence type="ECO:0000255" key="1">
    <source>
        <dbReference type="PROSITE-ProRule" id="PRU01182"/>
    </source>
</evidence>
<evidence type="ECO:0000305" key="2"/>
<sequence length="227" mass="25154">MPAIKDWPEDERPREKLLHRGAEALSDAELLALILRSGDAASGHSALDQGRLLIQQFDTLRQMATATTSELQAIKGIGPAKAAELQAVFELARRFGRNPLRPGDRYTSPQAVFAHFHERLRDHKRERFIALLLDSKNRLLREVGISEGSLTASIVHPRDVFAPVVRESAAAVLFVHNHPSGDPSPSREDLDITQRLREVGELMGVRVLDHIIIGDEGYVSLADRGVL</sequence>
<protein>
    <recommendedName>
        <fullName>UPF0758 protein Pcar_0065</fullName>
    </recommendedName>
</protein>
<proteinExistence type="inferred from homology"/>